<name>HBB1_CHAMP</name>
<sequence length="147" mass="15964">MVHLTGEEKAAVTGLWGKVNVEEVGGEALGRLLVVYPWTQRFFDSFGDLSNAGAVMGNAKVKAHGKKVLNSFGEGLKNLDNLKGTFAKLSELHCDKLHVDPENFRLLGNVLVVVLARHFGKDFTPPVQAAFQKLAQGVATALAHKYH</sequence>
<dbReference type="SMR" id="P68087"/>
<dbReference type="GO" id="GO:0072562">
    <property type="term" value="C:blood microparticle"/>
    <property type="evidence" value="ECO:0007669"/>
    <property type="project" value="TreeGrafter"/>
</dbReference>
<dbReference type="GO" id="GO:0031838">
    <property type="term" value="C:haptoglobin-hemoglobin complex"/>
    <property type="evidence" value="ECO:0007669"/>
    <property type="project" value="TreeGrafter"/>
</dbReference>
<dbReference type="GO" id="GO:0005833">
    <property type="term" value="C:hemoglobin complex"/>
    <property type="evidence" value="ECO:0007669"/>
    <property type="project" value="InterPro"/>
</dbReference>
<dbReference type="GO" id="GO:0031720">
    <property type="term" value="F:haptoglobin binding"/>
    <property type="evidence" value="ECO:0007669"/>
    <property type="project" value="TreeGrafter"/>
</dbReference>
<dbReference type="GO" id="GO:0020037">
    <property type="term" value="F:heme binding"/>
    <property type="evidence" value="ECO:0007669"/>
    <property type="project" value="InterPro"/>
</dbReference>
<dbReference type="GO" id="GO:0031721">
    <property type="term" value="F:hemoglobin alpha binding"/>
    <property type="evidence" value="ECO:0007669"/>
    <property type="project" value="TreeGrafter"/>
</dbReference>
<dbReference type="GO" id="GO:0046872">
    <property type="term" value="F:metal ion binding"/>
    <property type="evidence" value="ECO:0007669"/>
    <property type="project" value="UniProtKB-KW"/>
</dbReference>
<dbReference type="GO" id="GO:0043177">
    <property type="term" value="F:organic acid binding"/>
    <property type="evidence" value="ECO:0007669"/>
    <property type="project" value="TreeGrafter"/>
</dbReference>
<dbReference type="GO" id="GO:0019825">
    <property type="term" value="F:oxygen binding"/>
    <property type="evidence" value="ECO:0007669"/>
    <property type="project" value="InterPro"/>
</dbReference>
<dbReference type="GO" id="GO:0005344">
    <property type="term" value="F:oxygen carrier activity"/>
    <property type="evidence" value="ECO:0007669"/>
    <property type="project" value="UniProtKB-KW"/>
</dbReference>
<dbReference type="GO" id="GO:0004601">
    <property type="term" value="F:peroxidase activity"/>
    <property type="evidence" value="ECO:0007669"/>
    <property type="project" value="TreeGrafter"/>
</dbReference>
<dbReference type="GO" id="GO:0042744">
    <property type="term" value="P:hydrogen peroxide catabolic process"/>
    <property type="evidence" value="ECO:0007669"/>
    <property type="project" value="TreeGrafter"/>
</dbReference>
<dbReference type="CDD" id="cd08925">
    <property type="entry name" value="Hb-beta-like"/>
    <property type="match status" value="1"/>
</dbReference>
<dbReference type="FunFam" id="1.10.490.10:FF:000001">
    <property type="entry name" value="Hemoglobin subunit beta"/>
    <property type="match status" value="1"/>
</dbReference>
<dbReference type="Gene3D" id="1.10.490.10">
    <property type="entry name" value="Globins"/>
    <property type="match status" value="1"/>
</dbReference>
<dbReference type="InterPro" id="IPR000971">
    <property type="entry name" value="Globin"/>
</dbReference>
<dbReference type="InterPro" id="IPR009050">
    <property type="entry name" value="Globin-like_sf"/>
</dbReference>
<dbReference type="InterPro" id="IPR012292">
    <property type="entry name" value="Globin/Proto"/>
</dbReference>
<dbReference type="InterPro" id="IPR002337">
    <property type="entry name" value="Hemoglobin_b"/>
</dbReference>
<dbReference type="InterPro" id="IPR050056">
    <property type="entry name" value="Hemoglobin_oxygen_transport"/>
</dbReference>
<dbReference type="PANTHER" id="PTHR11442">
    <property type="entry name" value="HEMOGLOBIN FAMILY MEMBER"/>
    <property type="match status" value="1"/>
</dbReference>
<dbReference type="PANTHER" id="PTHR11442:SF42">
    <property type="entry name" value="HEMOGLOBIN SUBUNIT BETA"/>
    <property type="match status" value="1"/>
</dbReference>
<dbReference type="Pfam" id="PF00042">
    <property type="entry name" value="Globin"/>
    <property type="match status" value="1"/>
</dbReference>
<dbReference type="PRINTS" id="PR00814">
    <property type="entry name" value="BETAHAEM"/>
</dbReference>
<dbReference type="SUPFAM" id="SSF46458">
    <property type="entry name" value="Globin-like"/>
    <property type="match status" value="1"/>
</dbReference>
<dbReference type="PROSITE" id="PS01033">
    <property type="entry name" value="GLOBIN"/>
    <property type="match status" value="1"/>
</dbReference>
<organism>
    <name type="scientific">Chalinolobus morio</name>
    <name type="common">Chocolate-wattled bat</name>
    <name type="synonym">Lobe-lipped bat</name>
    <dbReference type="NCBI Taxonomy" id="50353"/>
    <lineage>
        <taxon>Eukaryota</taxon>
        <taxon>Metazoa</taxon>
        <taxon>Chordata</taxon>
        <taxon>Craniata</taxon>
        <taxon>Vertebrata</taxon>
        <taxon>Euteleostomi</taxon>
        <taxon>Mammalia</taxon>
        <taxon>Eutheria</taxon>
        <taxon>Laurasiatheria</taxon>
        <taxon>Chiroptera</taxon>
        <taxon>Yangochiroptera</taxon>
        <taxon>Vespertilionidae</taxon>
        <taxon>Chalinolobus</taxon>
    </lineage>
</organism>
<evidence type="ECO:0000250" key="1">
    <source>
        <dbReference type="UniProtKB" id="P02086"/>
    </source>
</evidence>
<evidence type="ECO:0000250" key="2">
    <source>
        <dbReference type="UniProtKB" id="P02088"/>
    </source>
</evidence>
<evidence type="ECO:0000250" key="3">
    <source>
        <dbReference type="UniProtKB" id="P02089"/>
    </source>
</evidence>
<evidence type="ECO:0000250" key="4">
    <source>
        <dbReference type="UniProtKB" id="P02091"/>
    </source>
</evidence>
<evidence type="ECO:0000250" key="5">
    <source>
        <dbReference type="UniProtKB" id="P11517"/>
    </source>
</evidence>
<evidence type="ECO:0000255" key="6">
    <source>
        <dbReference type="PROSITE-ProRule" id="PRU00238"/>
    </source>
</evidence>
<evidence type="ECO:0000269" key="7">
    <source>
    </source>
</evidence>
<feature type="initiator methionine" description="Removed" evidence="1 7">
    <location>
        <position position="1"/>
    </location>
</feature>
<feature type="chain" id="PRO_0000052922" description="Hemoglobin subunit beta-1">
    <location>
        <begin position="2"/>
        <end position="147"/>
    </location>
</feature>
<feature type="domain" description="Globin" evidence="6">
    <location>
        <begin position="3"/>
        <end position="147"/>
    </location>
</feature>
<feature type="binding site" description="distal binding residue">
    <location>
        <position position="64"/>
    </location>
    <ligand>
        <name>heme b</name>
        <dbReference type="ChEBI" id="CHEBI:60344"/>
    </ligand>
    <ligandPart>
        <name>Fe</name>
        <dbReference type="ChEBI" id="CHEBI:18248"/>
    </ligandPart>
</feature>
<feature type="binding site" description="proximal binding residue">
    <location>
        <position position="93"/>
    </location>
    <ligand>
        <name>heme b</name>
        <dbReference type="ChEBI" id="CHEBI:60344"/>
    </ligand>
    <ligandPart>
        <name>Fe</name>
        <dbReference type="ChEBI" id="CHEBI:18248"/>
    </ligandPart>
</feature>
<feature type="modified residue" description="N-acetylvaline" evidence="1">
    <location>
        <position position="2"/>
    </location>
</feature>
<feature type="modified residue" description="N6-succinyllysine" evidence="2">
    <location>
        <position position="18"/>
    </location>
</feature>
<feature type="modified residue" description="Phosphoserine" evidence="4">
    <location>
        <position position="45"/>
    </location>
</feature>
<feature type="modified residue" description="N6-succinyllysine" evidence="3">
    <location>
        <position position="60"/>
    </location>
</feature>
<feature type="modified residue" description="Asymmetric dimethylarginine" evidence="3">
    <location>
        <position position="105"/>
    </location>
</feature>
<feature type="modified residue" description="Phosphothreonine" evidence="5">
    <location>
        <position position="124"/>
    </location>
</feature>
<protein>
    <recommendedName>
        <fullName>Hemoglobin subunit beta-1</fullName>
    </recommendedName>
    <alternativeName>
        <fullName>Beta-1-globin</fullName>
    </alternativeName>
    <alternativeName>
        <fullName>Hemoglobin beta-1 chain</fullName>
    </alternativeName>
    <alternativeName>
        <fullName>Hemoglobin beta-I chain</fullName>
    </alternativeName>
</protein>
<proteinExistence type="evidence at protein level"/>
<keyword id="KW-0007">Acetylation</keyword>
<keyword id="KW-0903">Direct protein sequencing</keyword>
<keyword id="KW-0349">Heme</keyword>
<keyword id="KW-0408">Iron</keyword>
<keyword id="KW-0479">Metal-binding</keyword>
<keyword id="KW-0488">Methylation</keyword>
<keyword id="KW-0561">Oxygen transport</keyword>
<keyword id="KW-0597">Phosphoprotein</keyword>
<keyword id="KW-0813">Transport</keyword>
<reference key="1">
    <citation type="journal article" date="1995" name="Biol. Chem. Hoppe-Seyler">
        <title>The primary structure of the hemoglobin from the lobe-lipped bat (Chalinolobus morio, microchiroptera).</title>
        <authorList>
            <person name="Singer G.A.M."/>
            <person name="Kleinschmidt T."/>
            <person name="Braunitzer G."/>
        </authorList>
    </citation>
    <scope>PROTEIN SEQUENCE OF 2-147</scope>
</reference>
<comment type="function">
    <text>Involved in oxygen transport from the lung to the various peripheral tissues.</text>
</comment>
<comment type="subunit">
    <text>Hb1 is a heterotetramer of two alpha chains and two beta-1 chains.</text>
</comment>
<comment type="tissue specificity">
    <text>Red blood cells.</text>
</comment>
<comment type="similarity">
    <text evidence="6">Belongs to the globin family.</text>
</comment>
<accession>P68087</accession>
<gene>
    <name type="primary">HBB1</name>
</gene>